<reference key="1">
    <citation type="journal article" date="1998" name="Science">
        <title>Complete genome sequence of Treponema pallidum, the syphilis spirochete.</title>
        <authorList>
            <person name="Fraser C.M."/>
            <person name="Norris S.J."/>
            <person name="Weinstock G.M."/>
            <person name="White O."/>
            <person name="Sutton G.G."/>
            <person name="Dodson R.J."/>
            <person name="Gwinn M.L."/>
            <person name="Hickey E.K."/>
            <person name="Clayton R.A."/>
            <person name="Ketchum K.A."/>
            <person name="Sodergren E."/>
            <person name="Hardham J.M."/>
            <person name="McLeod M.P."/>
            <person name="Salzberg S.L."/>
            <person name="Peterson J.D."/>
            <person name="Khalak H.G."/>
            <person name="Richardson D.L."/>
            <person name="Howell J.K."/>
            <person name="Chidambaram M."/>
            <person name="Utterback T.R."/>
            <person name="McDonald L.A."/>
            <person name="Artiach P."/>
            <person name="Bowman C."/>
            <person name="Cotton M.D."/>
            <person name="Fujii C."/>
            <person name="Garland S.A."/>
            <person name="Hatch B."/>
            <person name="Horst K."/>
            <person name="Roberts K.M."/>
            <person name="Sandusky M."/>
            <person name="Weidman J.F."/>
            <person name="Smith H.O."/>
            <person name="Venter J.C."/>
        </authorList>
    </citation>
    <scope>NUCLEOTIDE SEQUENCE [LARGE SCALE GENOMIC DNA]</scope>
    <source>
        <strain>Nichols</strain>
    </source>
</reference>
<protein>
    <recommendedName>
        <fullName evidence="1">Ribosome maturation factor RimM</fullName>
    </recommendedName>
</protein>
<feature type="chain" id="PRO_0000163383" description="Ribosome maturation factor RimM">
    <location>
        <begin position="1"/>
        <end position="174"/>
    </location>
</feature>
<feature type="domain" description="PRC barrel" evidence="1">
    <location>
        <begin position="101"/>
        <end position="174"/>
    </location>
</feature>
<name>RIMM_TREPA</name>
<keyword id="KW-0143">Chaperone</keyword>
<keyword id="KW-0963">Cytoplasm</keyword>
<keyword id="KW-1185">Reference proteome</keyword>
<keyword id="KW-0690">Ribosome biogenesis</keyword>
<keyword id="KW-0698">rRNA processing</keyword>
<organism>
    <name type="scientific">Treponema pallidum (strain Nichols)</name>
    <dbReference type="NCBI Taxonomy" id="243276"/>
    <lineage>
        <taxon>Bacteria</taxon>
        <taxon>Pseudomonadati</taxon>
        <taxon>Spirochaetota</taxon>
        <taxon>Spirochaetia</taxon>
        <taxon>Spirochaetales</taxon>
        <taxon>Treponemataceae</taxon>
        <taxon>Treponema</taxon>
    </lineage>
</organism>
<comment type="function">
    <text evidence="1">An accessory protein needed during the final step in the assembly of 30S ribosomal subunit, possibly for assembly of the head region. Essential for efficient processing of 16S rRNA. May be needed both before and after RbfA during the maturation of 16S rRNA. It has affinity for free ribosomal 30S subunits but not for 70S ribosomes.</text>
</comment>
<comment type="subunit">
    <text evidence="1">Binds ribosomal protein uS19.</text>
</comment>
<comment type="subcellular location">
    <subcellularLocation>
        <location evidence="1">Cytoplasm</location>
    </subcellularLocation>
</comment>
<comment type="domain">
    <text evidence="1">The PRC barrel domain binds ribosomal protein uS19.</text>
</comment>
<comment type="similarity">
    <text evidence="1">Belongs to the RimM family.</text>
</comment>
<sequence>MTARIVSTFGVAGLLRLKSFSGEYAHLATLKQVCLAPPRSRSSGTLACALPREAVHMVEHVLLRAQDALLKLHRVDTVECARTFVGAELRVPRAEACPLSAGEFYLADLCRCELVFEGSAVGVVLSVVEGGGSSLLEVQRTHGGVCYVPFHRTFIGDVDVGRKKIELLQRWILE</sequence>
<dbReference type="EMBL" id="AE000520">
    <property type="protein sequence ID" value="AAC65859.1"/>
    <property type="molecule type" value="Genomic_DNA"/>
</dbReference>
<dbReference type="PIR" id="H71267">
    <property type="entry name" value="H71267"/>
</dbReference>
<dbReference type="SMR" id="O83877"/>
<dbReference type="IntAct" id="O83877">
    <property type="interactions" value="110"/>
</dbReference>
<dbReference type="STRING" id="243276.TP_0907"/>
<dbReference type="EnsemblBacteria" id="AAC65859">
    <property type="protein sequence ID" value="AAC65859"/>
    <property type="gene ID" value="TP_0907"/>
</dbReference>
<dbReference type="KEGG" id="tpa:TP_0907"/>
<dbReference type="KEGG" id="tpw:TPANIC_0907"/>
<dbReference type="eggNOG" id="COG0806">
    <property type="taxonomic scope" value="Bacteria"/>
</dbReference>
<dbReference type="HOGENOM" id="CLU_077636_3_2_12"/>
<dbReference type="Proteomes" id="UP000000811">
    <property type="component" value="Chromosome"/>
</dbReference>
<dbReference type="GO" id="GO:0005737">
    <property type="term" value="C:cytoplasm"/>
    <property type="evidence" value="ECO:0007669"/>
    <property type="project" value="UniProtKB-SubCell"/>
</dbReference>
<dbReference type="GO" id="GO:0005840">
    <property type="term" value="C:ribosome"/>
    <property type="evidence" value="ECO:0007669"/>
    <property type="project" value="InterPro"/>
</dbReference>
<dbReference type="GO" id="GO:0043022">
    <property type="term" value="F:ribosome binding"/>
    <property type="evidence" value="ECO:0007669"/>
    <property type="project" value="InterPro"/>
</dbReference>
<dbReference type="GO" id="GO:0042274">
    <property type="term" value="P:ribosomal small subunit biogenesis"/>
    <property type="evidence" value="ECO:0007669"/>
    <property type="project" value="UniProtKB-UniRule"/>
</dbReference>
<dbReference type="GO" id="GO:0006364">
    <property type="term" value="P:rRNA processing"/>
    <property type="evidence" value="ECO:0007669"/>
    <property type="project" value="UniProtKB-UniRule"/>
</dbReference>
<dbReference type="Gene3D" id="2.30.30.240">
    <property type="entry name" value="PRC-barrel domain"/>
    <property type="match status" value="1"/>
</dbReference>
<dbReference type="Gene3D" id="2.40.30.60">
    <property type="entry name" value="RimM"/>
    <property type="match status" value="1"/>
</dbReference>
<dbReference type="HAMAP" id="MF_00014">
    <property type="entry name" value="Ribosome_mat_RimM"/>
    <property type="match status" value="1"/>
</dbReference>
<dbReference type="InterPro" id="IPR011033">
    <property type="entry name" value="PRC_barrel-like_sf"/>
</dbReference>
<dbReference type="InterPro" id="IPR056792">
    <property type="entry name" value="PRC_RimM"/>
</dbReference>
<dbReference type="InterPro" id="IPR011961">
    <property type="entry name" value="RimM"/>
</dbReference>
<dbReference type="InterPro" id="IPR002676">
    <property type="entry name" value="RimM_N"/>
</dbReference>
<dbReference type="InterPro" id="IPR036976">
    <property type="entry name" value="RimM_N_sf"/>
</dbReference>
<dbReference type="InterPro" id="IPR009000">
    <property type="entry name" value="Transl_B-barrel_sf"/>
</dbReference>
<dbReference type="NCBIfam" id="TIGR02273">
    <property type="entry name" value="16S_RimM"/>
    <property type="match status" value="1"/>
</dbReference>
<dbReference type="PANTHER" id="PTHR33692">
    <property type="entry name" value="RIBOSOME MATURATION FACTOR RIMM"/>
    <property type="match status" value="1"/>
</dbReference>
<dbReference type="PANTHER" id="PTHR33692:SF1">
    <property type="entry name" value="RIBOSOME MATURATION FACTOR RIMM"/>
    <property type="match status" value="1"/>
</dbReference>
<dbReference type="Pfam" id="PF24986">
    <property type="entry name" value="PRC_RimM"/>
    <property type="match status" value="1"/>
</dbReference>
<dbReference type="Pfam" id="PF01782">
    <property type="entry name" value="RimM"/>
    <property type="match status" value="1"/>
</dbReference>
<dbReference type="SUPFAM" id="SSF50346">
    <property type="entry name" value="PRC-barrel domain"/>
    <property type="match status" value="1"/>
</dbReference>
<dbReference type="SUPFAM" id="SSF50447">
    <property type="entry name" value="Translation proteins"/>
    <property type="match status" value="1"/>
</dbReference>
<evidence type="ECO:0000255" key="1">
    <source>
        <dbReference type="HAMAP-Rule" id="MF_00014"/>
    </source>
</evidence>
<accession>O83877</accession>
<gene>
    <name evidence="1" type="primary">rimM</name>
    <name type="ordered locus">TP_0907</name>
</gene>
<proteinExistence type="inferred from homology"/>